<evidence type="ECO:0000255" key="1">
    <source>
        <dbReference type="HAMAP-Rule" id="MF_01249"/>
    </source>
</evidence>
<accession>B7IPS7</accession>
<proteinExistence type="inferred from homology"/>
<gene>
    <name evidence="1" type="primary">hprK</name>
    <name type="ordered locus">BCG9842_B5675</name>
</gene>
<feature type="chain" id="PRO_1000139885" description="HPr kinase/phosphorylase">
    <location>
        <begin position="1"/>
        <end position="309"/>
    </location>
</feature>
<feature type="region of interest" description="Important for the catalytic mechanism of both phosphorylation and dephosphorylation" evidence="1">
    <location>
        <begin position="201"/>
        <end position="210"/>
    </location>
</feature>
<feature type="region of interest" description="Important for the catalytic mechanism of dephosphorylation" evidence="1">
    <location>
        <begin position="264"/>
        <end position="269"/>
    </location>
</feature>
<feature type="active site" evidence="1">
    <location>
        <position position="138"/>
    </location>
</feature>
<feature type="active site" evidence="1">
    <location>
        <position position="159"/>
    </location>
</feature>
<feature type="active site" description="Proton acceptor; for phosphorylation activity. Proton donor; for dephosphorylation activity" evidence="1">
    <location>
        <position position="177"/>
    </location>
</feature>
<feature type="active site" evidence="1">
    <location>
        <position position="243"/>
    </location>
</feature>
<feature type="binding site" evidence="1">
    <location>
        <begin position="153"/>
        <end position="160"/>
    </location>
    <ligand>
        <name>ATP</name>
        <dbReference type="ChEBI" id="CHEBI:30616"/>
    </ligand>
</feature>
<feature type="binding site" evidence="1">
    <location>
        <position position="160"/>
    </location>
    <ligand>
        <name>Mg(2+)</name>
        <dbReference type="ChEBI" id="CHEBI:18420"/>
    </ligand>
</feature>
<feature type="binding site" evidence="1">
    <location>
        <position position="202"/>
    </location>
    <ligand>
        <name>Mg(2+)</name>
        <dbReference type="ChEBI" id="CHEBI:18420"/>
    </ligand>
</feature>
<keyword id="KW-0067">ATP-binding</keyword>
<keyword id="KW-0119">Carbohydrate metabolism</keyword>
<keyword id="KW-0418">Kinase</keyword>
<keyword id="KW-0460">Magnesium</keyword>
<keyword id="KW-0479">Metal-binding</keyword>
<keyword id="KW-0511">Multifunctional enzyme</keyword>
<keyword id="KW-0547">Nucleotide-binding</keyword>
<keyword id="KW-0723">Serine/threonine-protein kinase</keyword>
<keyword id="KW-0808">Transferase</keyword>
<comment type="function">
    <text evidence="1">Catalyzes the ATP- as well as the pyrophosphate-dependent phosphorylation of a specific serine residue in HPr, a phosphocarrier protein of the phosphoenolpyruvate-dependent sugar phosphotransferase system (PTS). HprK/P also catalyzes the pyrophosphate-producing, inorganic phosphate-dependent dephosphorylation (phosphorolysis) of seryl-phosphorylated HPr (P-Ser-HPr). The two antagonistic activities of HprK/P are regulated by several intracellular metabolites, which change their concentration in response to the absence or presence of rapidly metabolisable carbon sources (glucose, fructose, etc.) in the growth medium. Also phosphorylates/dephosphorylates the HPr-like catabolite repression protein crh on a specific serine residue. Therefore, by controlling the phosphorylation state of HPr and crh, HPrK/P is a sensor enzyme that plays a major role in the regulation of carbon metabolism and sugar transport: it mediates carbon catabolite repression (CCR), and regulates PTS-catalyzed carbohydrate uptake and inducer exclusion.</text>
</comment>
<comment type="catalytic activity">
    <reaction evidence="1">
        <text>[HPr protein]-L-serine + ATP = [HPr protein]-O-phospho-L-serine + ADP + H(+)</text>
        <dbReference type="Rhea" id="RHEA:46600"/>
        <dbReference type="Rhea" id="RHEA-COMP:11602"/>
        <dbReference type="Rhea" id="RHEA-COMP:11603"/>
        <dbReference type="ChEBI" id="CHEBI:15378"/>
        <dbReference type="ChEBI" id="CHEBI:29999"/>
        <dbReference type="ChEBI" id="CHEBI:30616"/>
        <dbReference type="ChEBI" id="CHEBI:83421"/>
        <dbReference type="ChEBI" id="CHEBI:456216"/>
    </reaction>
</comment>
<comment type="catalytic activity">
    <reaction evidence="1">
        <text>[HPr protein]-O-phospho-L-serine + phosphate + H(+) = [HPr protein]-L-serine + diphosphate</text>
        <dbReference type="Rhea" id="RHEA:46604"/>
        <dbReference type="Rhea" id="RHEA-COMP:11602"/>
        <dbReference type="Rhea" id="RHEA-COMP:11603"/>
        <dbReference type="ChEBI" id="CHEBI:15378"/>
        <dbReference type="ChEBI" id="CHEBI:29999"/>
        <dbReference type="ChEBI" id="CHEBI:33019"/>
        <dbReference type="ChEBI" id="CHEBI:43474"/>
        <dbReference type="ChEBI" id="CHEBI:83421"/>
    </reaction>
</comment>
<comment type="cofactor">
    <cofactor evidence="1">
        <name>Mg(2+)</name>
        <dbReference type="ChEBI" id="CHEBI:18420"/>
    </cofactor>
</comment>
<comment type="subunit">
    <text evidence="1">Homohexamer.</text>
</comment>
<comment type="domain">
    <text evidence="1">The Walker A ATP-binding motif also binds Pi and PPi.</text>
</comment>
<comment type="miscellaneous">
    <text evidence="1">Both phosphorylation and phosphorolysis are carried out by the same active site and suggest a common mechanism for both reactions.</text>
</comment>
<comment type="similarity">
    <text evidence="1">Belongs to the HPrK/P family.</text>
</comment>
<sequence>MPKVRTKDLIEQFQLELISGEEGIHRPIDTSDLSRPGIEMAGFFTYYPADRVQLLGKTELTFFDTLTTEQKQERMKALCTEETPCIIITRNQDVPDELLQASRESGMPLLRSSQTTTRLSSRLTNYLEGKLAPTTAVHGVLVDIYGVGVLITGQSGVGKSETALELVKRGHRLVADDSVEIRQEDEDTLVGSSPDLIEHLLEIRGLGIINVMTLFGAGAVRNYKRITLVINLEIWDQKKNYDRLGLDEEKMKIIDTELTKITLPVRPGRNLAVIIEVAAMNFRLKRMGVNAAQQFSERLMSAIELGNQE</sequence>
<organism>
    <name type="scientific">Bacillus cereus (strain G9842)</name>
    <dbReference type="NCBI Taxonomy" id="405531"/>
    <lineage>
        <taxon>Bacteria</taxon>
        <taxon>Bacillati</taxon>
        <taxon>Bacillota</taxon>
        <taxon>Bacilli</taxon>
        <taxon>Bacillales</taxon>
        <taxon>Bacillaceae</taxon>
        <taxon>Bacillus</taxon>
        <taxon>Bacillus cereus group</taxon>
    </lineage>
</organism>
<name>HPRK_BACC2</name>
<dbReference type="EC" id="2.7.11.-" evidence="1"/>
<dbReference type="EC" id="2.7.4.-" evidence="1"/>
<dbReference type="EMBL" id="CP001186">
    <property type="protein sequence ID" value="ACK97376.1"/>
    <property type="molecule type" value="Genomic_DNA"/>
</dbReference>
<dbReference type="RefSeq" id="WP_001127251.1">
    <property type="nucleotide sequence ID" value="NC_011772.1"/>
</dbReference>
<dbReference type="SMR" id="B7IPS7"/>
<dbReference type="GeneID" id="72451806"/>
<dbReference type="KEGG" id="bcg:BCG9842_B5675"/>
<dbReference type="HOGENOM" id="CLU_052030_0_1_9"/>
<dbReference type="Proteomes" id="UP000006744">
    <property type="component" value="Chromosome"/>
</dbReference>
<dbReference type="GO" id="GO:0005524">
    <property type="term" value="F:ATP binding"/>
    <property type="evidence" value="ECO:0007669"/>
    <property type="project" value="UniProtKB-UniRule"/>
</dbReference>
<dbReference type="GO" id="GO:0000287">
    <property type="term" value="F:magnesium ion binding"/>
    <property type="evidence" value="ECO:0007669"/>
    <property type="project" value="UniProtKB-UniRule"/>
</dbReference>
<dbReference type="GO" id="GO:0000155">
    <property type="term" value="F:phosphorelay sensor kinase activity"/>
    <property type="evidence" value="ECO:0007669"/>
    <property type="project" value="InterPro"/>
</dbReference>
<dbReference type="GO" id="GO:0004674">
    <property type="term" value="F:protein serine/threonine kinase activity"/>
    <property type="evidence" value="ECO:0007669"/>
    <property type="project" value="UniProtKB-KW"/>
</dbReference>
<dbReference type="GO" id="GO:0004712">
    <property type="term" value="F:protein serine/threonine/tyrosine kinase activity"/>
    <property type="evidence" value="ECO:0007669"/>
    <property type="project" value="UniProtKB-UniRule"/>
</dbReference>
<dbReference type="GO" id="GO:0006109">
    <property type="term" value="P:regulation of carbohydrate metabolic process"/>
    <property type="evidence" value="ECO:0007669"/>
    <property type="project" value="UniProtKB-UniRule"/>
</dbReference>
<dbReference type="CDD" id="cd01918">
    <property type="entry name" value="HprK_C"/>
    <property type="match status" value="1"/>
</dbReference>
<dbReference type="FunFam" id="3.40.1390.20:FF:000002">
    <property type="entry name" value="HPr kinase/phosphorylase"/>
    <property type="match status" value="1"/>
</dbReference>
<dbReference type="FunFam" id="3.40.50.300:FF:000174">
    <property type="entry name" value="HPr kinase/phosphorylase"/>
    <property type="match status" value="1"/>
</dbReference>
<dbReference type="Gene3D" id="3.40.1390.20">
    <property type="entry name" value="HprK N-terminal domain-like"/>
    <property type="match status" value="1"/>
</dbReference>
<dbReference type="Gene3D" id="3.40.50.300">
    <property type="entry name" value="P-loop containing nucleotide triphosphate hydrolases"/>
    <property type="match status" value="1"/>
</dbReference>
<dbReference type="HAMAP" id="MF_01249">
    <property type="entry name" value="HPr_kinase"/>
    <property type="match status" value="1"/>
</dbReference>
<dbReference type="InterPro" id="IPR003755">
    <property type="entry name" value="HPr(Ser)_kin/Pase"/>
</dbReference>
<dbReference type="InterPro" id="IPR011104">
    <property type="entry name" value="Hpr_kin/Pase_C"/>
</dbReference>
<dbReference type="InterPro" id="IPR011126">
    <property type="entry name" value="Hpr_kin/Pase_Hpr_N"/>
</dbReference>
<dbReference type="InterPro" id="IPR027417">
    <property type="entry name" value="P-loop_NTPase"/>
</dbReference>
<dbReference type="InterPro" id="IPR028979">
    <property type="entry name" value="Ser_kin/Pase_Hpr-like_N_sf"/>
</dbReference>
<dbReference type="NCBIfam" id="TIGR00679">
    <property type="entry name" value="hpr-ser"/>
    <property type="match status" value="1"/>
</dbReference>
<dbReference type="PANTHER" id="PTHR30305:SF1">
    <property type="entry name" value="HPR KINASE_PHOSPHORYLASE"/>
    <property type="match status" value="1"/>
</dbReference>
<dbReference type="PANTHER" id="PTHR30305">
    <property type="entry name" value="PROTEIN YJDM-RELATED"/>
    <property type="match status" value="1"/>
</dbReference>
<dbReference type="Pfam" id="PF07475">
    <property type="entry name" value="Hpr_kinase_C"/>
    <property type="match status" value="1"/>
</dbReference>
<dbReference type="Pfam" id="PF02603">
    <property type="entry name" value="Hpr_kinase_N"/>
    <property type="match status" value="1"/>
</dbReference>
<dbReference type="SUPFAM" id="SSF75138">
    <property type="entry name" value="HprK N-terminal domain-like"/>
    <property type="match status" value="1"/>
</dbReference>
<dbReference type="SUPFAM" id="SSF53795">
    <property type="entry name" value="PEP carboxykinase-like"/>
    <property type="match status" value="1"/>
</dbReference>
<reference key="1">
    <citation type="submission" date="2008-10" db="EMBL/GenBank/DDBJ databases">
        <title>Genome sequence of Bacillus cereus G9842.</title>
        <authorList>
            <person name="Dodson R.J."/>
            <person name="Durkin A.S."/>
            <person name="Rosovitz M.J."/>
            <person name="Rasko D.A."/>
            <person name="Hoffmaster A."/>
            <person name="Ravel J."/>
            <person name="Sutton G."/>
        </authorList>
    </citation>
    <scope>NUCLEOTIDE SEQUENCE [LARGE SCALE GENOMIC DNA]</scope>
    <source>
        <strain>G9842</strain>
    </source>
</reference>
<protein>
    <recommendedName>
        <fullName evidence="1">HPr kinase/phosphorylase</fullName>
        <shortName evidence="1">HPrK/P</shortName>
        <ecNumber evidence="1">2.7.11.-</ecNumber>
        <ecNumber evidence="1">2.7.4.-</ecNumber>
    </recommendedName>
    <alternativeName>
        <fullName evidence="1">HPr(Ser) kinase/phosphorylase</fullName>
    </alternativeName>
</protein>